<sequence>MTQGKKKKRAANRSIMLAKKIIIKDGGTPQGIGSPSVYHAVIVIFLEFFAWGLLTAPTLVVLHETFPKHTFLMNGLIQGVKGLLSFLSAPLIGALSDVWGRKSFLLLTVFFTCAPIPLMKISPWWYFAVISVSGVFAVTFSVVFAYVADITQEHERSMAYGLVSATFAASLVTSPAIGAYLGRVYGDSLVVVLATAIALLDICFILVAVPESLPEKMRPASWGAPISWEQADPFASLKKVGQDSIVLLICITVFLSYLPEAGQYSSFFLYLRQIMKFSPESVAAFIAVLGILSIIAQTIVLSLLMRSIGNKNTILLGLGFQILQLAWYGFGSEPWMMWAAGAVAAMSSITFPAVSALVSRTADADQQGVVQGMITGIRGLCNGLGPALYGFIFYIFHVELKELPITGTDLGTNTSPQHHFEQNSIIPGPPFLFGACSVLLALLVALFIPEHTNLSLRSSSWRKHCGSHSHPHSTQAPGEAKEPLLQDTNV</sequence>
<protein>
    <recommendedName>
        <fullName evidence="1">Hippocampus abundant transcript 1 protein</fullName>
    </recommendedName>
    <alternativeName>
        <fullName evidence="1">Major facilitator superfamily domain-containing 14A</fullName>
    </alternativeName>
</protein>
<proteinExistence type="evidence at transcript level"/>
<keyword id="KW-0007">Acetylation</keyword>
<keyword id="KW-0325">Glycoprotein</keyword>
<keyword id="KW-0472">Membrane</keyword>
<keyword id="KW-1185">Reference proteome</keyword>
<keyword id="KW-0812">Transmembrane</keyword>
<keyword id="KW-1133">Transmembrane helix</keyword>
<keyword id="KW-0813">Transport</keyword>
<evidence type="ECO:0000250" key="1">
    <source>
        <dbReference type="UniProtKB" id="Q96MC6"/>
    </source>
</evidence>
<evidence type="ECO:0000255" key="2"/>
<evidence type="ECO:0000256" key="3">
    <source>
        <dbReference type="SAM" id="MobiDB-lite"/>
    </source>
</evidence>
<evidence type="ECO:0000269" key="4">
    <source>
    </source>
</evidence>
<evidence type="ECO:0000305" key="5"/>
<reference key="1">
    <citation type="journal article" date="1997" name="Biochem. Biophys. Res. Commun.">
        <title>Cloning of a cDNA encoding a novel sugar transporter expressed in the neonatal mouse hippocampus.</title>
        <authorList>
            <person name="Matsuo N."/>
            <person name="Kawamoto S."/>
            <person name="Matsubara K."/>
            <person name="Okubo K."/>
        </authorList>
    </citation>
    <scope>NUCLEOTIDE SEQUENCE [MRNA]</scope>
    <scope>TISSUE SPECIFICITY</scope>
    <scope>DEVELOPMENTAL STAGE</scope>
    <source>
        <strain>C57BL/6J</strain>
        <tissue>Hippocampus</tissue>
    </source>
</reference>
<reference key="2">
    <citation type="journal article" date="2005" name="Science">
        <title>The transcriptional landscape of the mammalian genome.</title>
        <authorList>
            <person name="Carninci P."/>
            <person name="Kasukawa T."/>
            <person name="Katayama S."/>
            <person name="Gough J."/>
            <person name="Frith M.C."/>
            <person name="Maeda N."/>
            <person name="Oyama R."/>
            <person name="Ravasi T."/>
            <person name="Lenhard B."/>
            <person name="Wells C."/>
            <person name="Kodzius R."/>
            <person name="Shimokawa K."/>
            <person name="Bajic V.B."/>
            <person name="Brenner S.E."/>
            <person name="Batalov S."/>
            <person name="Forrest A.R."/>
            <person name="Zavolan M."/>
            <person name="Davis M.J."/>
            <person name="Wilming L.G."/>
            <person name="Aidinis V."/>
            <person name="Allen J.E."/>
            <person name="Ambesi-Impiombato A."/>
            <person name="Apweiler R."/>
            <person name="Aturaliya R.N."/>
            <person name="Bailey T.L."/>
            <person name="Bansal M."/>
            <person name="Baxter L."/>
            <person name="Beisel K.W."/>
            <person name="Bersano T."/>
            <person name="Bono H."/>
            <person name="Chalk A.M."/>
            <person name="Chiu K.P."/>
            <person name="Choudhary V."/>
            <person name="Christoffels A."/>
            <person name="Clutterbuck D.R."/>
            <person name="Crowe M.L."/>
            <person name="Dalla E."/>
            <person name="Dalrymple B.P."/>
            <person name="de Bono B."/>
            <person name="Della Gatta G."/>
            <person name="di Bernardo D."/>
            <person name="Down T."/>
            <person name="Engstrom P."/>
            <person name="Fagiolini M."/>
            <person name="Faulkner G."/>
            <person name="Fletcher C.F."/>
            <person name="Fukushima T."/>
            <person name="Furuno M."/>
            <person name="Futaki S."/>
            <person name="Gariboldi M."/>
            <person name="Georgii-Hemming P."/>
            <person name="Gingeras T.R."/>
            <person name="Gojobori T."/>
            <person name="Green R.E."/>
            <person name="Gustincich S."/>
            <person name="Harbers M."/>
            <person name="Hayashi Y."/>
            <person name="Hensch T.K."/>
            <person name="Hirokawa N."/>
            <person name="Hill D."/>
            <person name="Huminiecki L."/>
            <person name="Iacono M."/>
            <person name="Ikeo K."/>
            <person name="Iwama A."/>
            <person name="Ishikawa T."/>
            <person name="Jakt M."/>
            <person name="Kanapin A."/>
            <person name="Katoh M."/>
            <person name="Kawasawa Y."/>
            <person name="Kelso J."/>
            <person name="Kitamura H."/>
            <person name="Kitano H."/>
            <person name="Kollias G."/>
            <person name="Krishnan S.P."/>
            <person name="Kruger A."/>
            <person name="Kummerfeld S.K."/>
            <person name="Kurochkin I.V."/>
            <person name="Lareau L.F."/>
            <person name="Lazarevic D."/>
            <person name="Lipovich L."/>
            <person name="Liu J."/>
            <person name="Liuni S."/>
            <person name="McWilliam S."/>
            <person name="Madan Babu M."/>
            <person name="Madera M."/>
            <person name="Marchionni L."/>
            <person name="Matsuda H."/>
            <person name="Matsuzawa S."/>
            <person name="Miki H."/>
            <person name="Mignone F."/>
            <person name="Miyake S."/>
            <person name="Morris K."/>
            <person name="Mottagui-Tabar S."/>
            <person name="Mulder N."/>
            <person name="Nakano N."/>
            <person name="Nakauchi H."/>
            <person name="Ng P."/>
            <person name="Nilsson R."/>
            <person name="Nishiguchi S."/>
            <person name="Nishikawa S."/>
            <person name="Nori F."/>
            <person name="Ohara O."/>
            <person name="Okazaki Y."/>
            <person name="Orlando V."/>
            <person name="Pang K.C."/>
            <person name="Pavan W.J."/>
            <person name="Pavesi G."/>
            <person name="Pesole G."/>
            <person name="Petrovsky N."/>
            <person name="Piazza S."/>
            <person name="Reed J."/>
            <person name="Reid J.F."/>
            <person name="Ring B.Z."/>
            <person name="Ringwald M."/>
            <person name="Rost B."/>
            <person name="Ruan Y."/>
            <person name="Salzberg S.L."/>
            <person name="Sandelin A."/>
            <person name="Schneider C."/>
            <person name="Schoenbach C."/>
            <person name="Sekiguchi K."/>
            <person name="Semple C.A."/>
            <person name="Seno S."/>
            <person name="Sessa L."/>
            <person name="Sheng Y."/>
            <person name="Shibata Y."/>
            <person name="Shimada H."/>
            <person name="Shimada K."/>
            <person name="Silva D."/>
            <person name="Sinclair B."/>
            <person name="Sperling S."/>
            <person name="Stupka E."/>
            <person name="Sugiura K."/>
            <person name="Sultana R."/>
            <person name="Takenaka Y."/>
            <person name="Taki K."/>
            <person name="Tammoja K."/>
            <person name="Tan S.L."/>
            <person name="Tang S."/>
            <person name="Taylor M.S."/>
            <person name="Tegner J."/>
            <person name="Teichmann S.A."/>
            <person name="Ueda H.R."/>
            <person name="van Nimwegen E."/>
            <person name="Verardo R."/>
            <person name="Wei C.L."/>
            <person name="Yagi K."/>
            <person name="Yamanishi H."/>
            <person name="Zabarovsky E."/>
            <person name="Zhu S."/>
            <person name="Zimmer A."/>
            <person name="Hide W."/>
            <person name="Bult C."/>
            <person name="Grimmond S.M."/>
            <person name="Teasdale R.D."/>
            <person name="Liu E.T."/>
            <person name="Brusic V."/>
            <person name="Quackenbush J."/>
            <person name="Wahlestedt C."/>
            <person name="Mattick J.S."/>
            <person name="Hume D.A."/>
            <person name="Kai C."/>
            <person name="Sasaki D."/>
            <person name="Tomaru Y."/>
            <person name="Fukuda S."/>
            <person name="Kanamori-Katayama M."/>
            <person name="Suzuki M."/>
            <person name="Aoki J."/>
            <person name="Arakawa T."/>
            <person name="Iida J."/>
            <person name="Imamura K."/>
            <person name="Itoh M."/>
            <person name="Kato T."/>
            <person name="Kawaji H."/>
            <person name="Kawagashira N."/>
            <person name="Kawashima T."/>
            <person name="Kojima M."/>
            <person name="Kondo S."/>
            <person name="Konno H."/>
            <person name="Nakano K."/>
            <person name="Ninomiya N."/>
            <person name="Nishio T."/>
            <person name="Okada M."/>
            <person name="Plessy C."/>
            <person name="Shibata K."/>
            <person name="Shiraki T."/>
            <person name="Suzuki S."/>
            <person name="Tagami M."/>
            <person name="Waki K."/>
            <person name="Watahiki A."/>
            <person name="Okamura-Oho Y."/>
            <person name="Suzuki H."/>
            <person name="Kawai J."/>
            <person name="Hayashizaki Y."/>
        </authorList>
    </citation>
    <scope>NUCLEOTIDE SEQUENCE [LARGE SCALE MRNA]</scope>
    <source>
        <strain>C57BL/6J</strain>
        <strain>NOD</strain>
        <tissue>Egg</tissue>
        <tissue>Lung</tissue>
        <tissue>Thymus</tissue>
        <tissue>Visual cortex</tissue>
    </source>
</reference>
<reference key="3">
    <citation type="submission" date="2005-09" db="EMBL/GenBank/DDBJ databases">
        <authorList>
            <person name="Mural R.J."/>
            <person name="Adams M.D."/>
            <person name="Myers E.W."/>
            <person name="Smith H.O."/>
            <person name="Venter J.C."/>
        </authorList>
    </citation>
    <scope>NUCLEOTIDE SEQUENCE [LARGE SCALE GENOMIC DNA]</scope>
</reference>
<reference key="4">
    <citation type="journal article" date="2004" name="Genome Res.">
        <title>The status, quality, and expansion of the NIH full-length cDNA project: the Mammalian Gene Collection (MGC).</title>
        <authorList>
            <consortium name="The MGC Project Team"/>
        </authorList>
    </citation>
    <scope>NUCLEOTIDE SEQUENCE [LARGE SCALE MRNA]</scope>
</reference>
<name>MF14A_MOUSE</name>
<dbReference type="EMBL" id="D88315">
    <property type="protein sequence ID" value="BAA22622.1"/>
    <property type="molecule type" value="mRNA"/>
</dbReference>
<dbReference type="EMBL" id="AK004779">
    <property type="protein sequence ID" value="BAB23557.1"/>
    <property type="molecule type" value="mRNA"/>
</dbReference>
<dbReference type="EMBL" id="AK135865">
    <property type="protein sequence ID" value="BAE22703.1"/>
    <property type="molecule type" value="mRNA"/>
</dbReference>
<dbReference type="EMBL" id="AK158838">
    <property type="protein sequence ID" value="BAE34689.1"/>
    <property type="molecule type" value="mRNA"/>
</dbReference>
<dbReference type="EMBL" id="AK169626">
    <property type="protein sequence ID" value="BAE41267.1"/>
    <property type="molecule type" value="mRNA"/>
</dbReference>
<dbReference type="EMBL" id="CH466532">
    <property type="protein sequence ID" value="EDL12373.1"/>
    <property type="molecule type" value="Genomic_DNA"/>
</dbReference>
<dbReference type="EMBL" id="BC118047">
    <property type="protein sequence ID" value="AAI18048.1"/>
    <property type="molecule type" value="mRNA"/>
</dbReference>
<dbReference type="CCDS" id="CCDS17790.1"/>
<dbReference type="PIR" id="JC5641">
    <property type="entry name" value="JC5641"/>
</dbReference>
<dbReference type="RefSeq" id="NP_032272.2">
    <property type="nucleotide sequence ID" value="NM_008246.3"/>
</dbReference>
<dbReference type="SMR" id="P70187"/>
<dbReference type="BioGRID" id="200301">
    <property type="interactions" value="2"/>
</dbReference>
<dbReference type="FunCoup" id="P70187">
    <property type="interactions" value="3556"/>
</dbReference>
<dbReference type="STRING" id="10090.ENSMUSP00000029570"/>
<dbReference type="GlyCosmos" id="P70187">
    <property type="glycosylation" value="2 sites, No reported glycans"/>
</dbReference>
<dbReference type="GlyGen" id="P70187">
    <property type="glycosylation" value="2 sites"/>
</dbReference>
<dbReference type="PhosphoSitePlus" id="P70187"/>
<dbReference type="SwissPalm" id="P70187"/>
<dbReference type="PaxDb" id="10090-ENSMUSP00000029570"/>
<dbReference type="PeptideAtlas" id="P70187"/>
<dbReference type="ProteomicsDB" id="295557"/>
<dbReference type="DNASU" id="15247"/>
<dbReference type="Ensembl" id="ENSMUST00000029570.9">
    <property type="protein sequence ID" value="ENSMUSP00000029570.6"/>
    <property type="gene ID" value="ENSMUSG00000089911.5"/>
</dbReference>
<dbReference type="GeneID" id="15247"/>
<dbReference type="KEGG" id="mmu:15247"/>
<dbReference type="UCSC" id="uc008rco.2">
    <property type="organism name" value="mouse"/>
</dbReference>
<dbReference type="AGR" id="MGI:1201609"/>
<dbReference type="CTD" id="64645"/>
<dbReference type="MGI" id="MGI:1201609">
    <property type="gene designation" value="Mfsd14a"/>
</dbReference>
<dbReference type="VEuPathDB" id="HostDB:ENSMUSG00000089911"/>
<dbReference type="eggNOG" id="KOG2816">
    <property type="taxonomic scope" value="Eukaryota"/>
</dbReference>
<dbReference type="GeneTree" id="ENSGT00940000157395"/>
<dbReference type="HOGENOM" id="CLU_001265_10_5_1"/>
<dbReference type="InParanoid" id="P70187"/>
<dbReference type="OMA" id="LGHLFMT"/>
<dbReference type="OrthoDB" id="419616at2759"/>
<dbReference type="PhylomeDB" id="P70187"/>
<dbReference type="TreeFam" id="TF313511"/>
<dbReference type="BioGRID-ORCS" id="15247">
    <property type="hits" value="2 hits in 76 CRISPR screens"/>
</dbReference>
<dbReference type="ChiTaRS" id="Mfsd14a">
    <property type="organism name" value="mouse"/>
</dbReference>
<dbReference type="PRO" id="PR:P70187"/>
<dbReference type="Proteomes" id="UP000000589">
    <property type="component" value="Chromosome 3"/>
</dbReference>
<dbReference type="RNAct" id="P70187">
    <property type="molecule type" value="protein"/>
</dbReference>
<dbReference type="Bgee" id="ENSMUSG00000089911">
    <property type="expression patterns" value="Expressed in spermatocyte and 246 other cell types or tissues"/>
</dbReference>
<dbReference type="GO" id="GO:0016020">
    <property type="term" value="C:membrane"/>
    <property type="evidence" value="ECO:0007669"/>
    <property type="project" value="UniProtKB-SubCell"/>
</dbReference>
<dbReference type="GO" id="GO:0022857">
    <property type="term" value="F:transmembrane transporter activity"/>
    <property type="evidence" value="ECO:0007669"/>
    <property type="project" value="InterPro"/>
</dbReference>
<dbReference type="GO" id="GO:0001675">
    <property type="term" value="P:acrosome assembly"/>
    <property type="evidence" value="ECO:0000315"/>
    <property type="project" value="MGI"/>
</dbReference>
<dbReference type="GO" id="GO:0030382">
    <property type="term" value="P:sperm mitochondrion organization"/>
    <property type="evidence" value="ECO:0000315"/>
    <property type="project" value="MGI"/>
</dbReference>
<dbReference type="GO" id="GO:0007286">
    <property type="term" value="P:spermatid development"/>
    <property type="evidence" value="ECO:0000315"/>
    <property type="project" value="MGI"/>
</dbReference>
<dbReference type="GO" id="GO:0007289">
    <property type="term" value="P:spermatid nucleus differentiation"/>
    <property type="evidence" value="ECO:0000315"/>
    <property type="project" value="MGI"/>
</dbReference>
<dbReference type="GO" id="GO:0007283">
    <property type="term" value="P:spermatogenesis"/>
    <property type="evidence" value="ECO:0000315"/>
    <property type="project" value="MGI"/>
</dbReference>
<dbReference type="CDD" id="cd17387">
    <property type="entry name" value="MFS_MFSD14"/>
    <property type="match status" value="1"/>
</dbReference>
<dbReference type="FunFam" id="1.20.1250.20:FF:000099">
    <property type="entry name" value="Hippocampus abundant gene transcript 1"/>
    <property type="match status" value="1"/>
</dbReference>
<dbReference type="Gene3D" id="1.20.1250.20">
    <property type="entry name" value="MFS general substrate transporter like domains"/>
    <property type="match status" value="1"/>
</dbReference>
<dbReference type="InterPro" id="IPR011701">
    <property type="entry name" value="MFS"/>
</dbReference>
<dbReference type="InterPro" id="IPR020846">
    <property type="entry name" value="MFS_dom"/>
</dbReference>
<dbReference type="InterPro" id="IPR036259">
    <property type="entry name" value="MFS_trans_sf"/>
</dbReference>
<dbReference type="InterPro" id="IPR005829">
    <property type="entry name" value="Sugar_transporter_CS"/>
</dbReference>
<dbReference type="InterPro" id="IPR001958">
    <property type="entry name" value="Tet-R_TetA/multi-R_MdtG-like"/>
</dbReference>
<dbReference type="PANTHER" id="PTHR23504:SF77">
    <property type="entry name" value="HIPPOCAMPUS ABUNDANT TRANSCRIPT 1 PROTEIN"/>
    <property type="match status" value="1"/>
</dbReference>
<dbReference type="PANTHER" id="PTHR23504">
    <property type="entry name" value="MAJOR FACILITATOR SUPERFAMILY DOMAIN-CONTAINING PROTEIN 10"/>
    <property type="match status" value="1"/>
</dbReference>
<dbReference type="Pfam" id="PF07690">
    <property type="entry name" value="MFS_1"/>
    <property type="match status" value="1"/>
</dbReference>
<dbReference type="PRINTS" id="PR01035">
    <property type="entry name" value="TCRTETA"/>
</dbReference>
<dbReference type="SUPFAM" id="SSF103473">
    <property type="entry name" value="MFS general substrate transporter"/>
    <property type="match status" value="1"/>
</dbReference>
<dbReference type="PROSITE" id="PS50850">
    <property type="entry name" value="MFS"/>
    <property type="match status" value="1"/>
</dbReference>
<dbReference type="PROSITE" id="PS00216">
    <property type="entry name" value="SUGAR_TRANSPORT_1"/>
    <property type="match status" value="1"/>
</dbReference>
<gene>
    <name evidence="1" type="primary">Mfsd14a</name>
    <name evidence="1" type="synonym">Hiat1</name>
</gene>
<organism>
    <name type="scientific">Mus musculus</name>
    <name type="common">Mouse</name>
    <dbReference type="NCBI Taxonomy" id="10090"/>
    <lineage>
        <taxon>Eukaryota</taxon>
        <taxon>Metazoa</taxon>
        <taxon>Chordata</taxon>
        <taxon>Craniata</taxon>
        <taxon>Vertebrata</taxon>
        <taxon>Euteleostomi</taxon>
        <taxon>Mammalia</taxon>
        <taxon>Eutheria</taxon>
        <taxon>Euarchontoglires</taxon>
        <taxon>Glires</taxon>
        <taxon>Rodentia</taxon>
        <taxon>Myomorpha</taxon>
        <taxon>Muroidea</taxon>
        <taxon>Muridae</taxon>
        <taxon>Murinae</taxon>
        <taxon>Mus</taxon>
        <taxon>Mus</taxon>
    </lineage>
</organism>
<accession>P70187</accession>
<accession>Q3TY74</accession>
<accession>Q9DBS0</accession>
<feature type="chain" id="PRO_0000084857" description="Hippocampus abundant transcript 1 protein">
    <location>
        <begin position="1"/>
        <end position="490"/>
    </location>
</feature>
<feature type="topological domain" description="Extracellular" evidence="2">
    <location>
        <begin position="1"/>
        <end position="40"/>
    </location>
</feature>
<feature type="transmembrane region" description="Helical; Name=1" evidence="2">
    <location>
        <begin position="41"/>
        <end position="61"/>
    </location>
</feature>
<feature type="topological domain" description="Cytoplasmic" evidence="2">
    <location>
        <begin position="62"/>
        <end position="74"/>
    </location>
</feature>
<feature type="transmembrane region" description="Helical; Name=2" evidence="2">
    <location>
        <begin position="75"/>
        <end position="95"/>
    </location>
</feature>
<feature type="topological domain" description="Extracellular" evidence="2">
    <location>
        <begin position="96"/>
        <end position="103"/>
    </location>
</feature>
<feature type="transmembrane region" description="Helical; Name=3" evidence="2">
    <location>
        <begin position="104"/>
        <end position="124"/>
    </location>
</feature>
<feature type="topological domain" description="Cytoplasmic" evidence="2">
    <location>
        <begin position="125"/>
        <end position="126"/>
    </location>
</feature>
<feature type="transmembrane region" description="Helical; Name=4" evidence="2">
    <location>
        <begin position="127"/>
        <end position="147"/>
    </location>
</feature>
<feature type="topological domain" description="Extracellular" evidence="2">
    <location>
        <begin position="148"/>
        <end position="160"/>
    </location>
</feature>
<feature type="transmembrane region" description="Helical; Name=5" evidence="2">
    <location>
        <begin position="161"/>
        <end position="181"/>
    </location>
</feature>
<feature type="topological domain" description="Cytoplasmic" evidence="2">
    <location>
        <begin position="182"/>
        <end position="188"/>
    </location>
</feature>
<feature type="transmembrane region" description="Helical; Name=6" evidence="2">
    <location>
        <begin position="189"/>
        <end position="209"/>
    </location>
</feature>
<feature type="topological domain" description="Extracellular" evidence="2">
    <location>
        <begin position="210"/>
        <end position="243"/>
    </location>
</feature>
<feature type="transmembrane region" description="Helical; Name=7" evidence="2">
    <location>
        <begin position="244"/>
        <end position="264"/>
    </location>
</feature>
<feature type="topological domain" description="Cytoplasmic" evidence="2">
    <location>
        <begin position="265"/>
        <end position="284"/>
    </location>
</feature>
<feature type="transmembrane region" description="Helical; Name=8" evidence="2">
    <location>
        <begin position="285"/>
        <end position="305"/>
    </location>
</feature>
<feature type="topological domain" description="Extracellular" evidence="2">
    <location>
        <begin position="306"/>
        <end position="313"/>
    </location>
</feature>
<feature type="transmembrane region" description="Helical; Name=9" evidence="2">
    <location>
        <begin position="314"/>
        <end position="334"/>
    </location>
</feature>
<feature type="topological domain" description="Cytoplasmic" evidence="2">
    <location>
        <begin position="335"/>
        <end position="337"/>
    </location>
</feature>
<feature type="transmembrane region" description="Helical; Name=10" evidence="2">
    <location>
        <begin position="338"/>
        <end position="358"/>
    </location>
</feature>
<feature type="topological domain" description="Extracellular" evidence="2">
    <location>
        <begin position="359"/>
        <end position="379"/>
    </location>
</feature>
<feature type="transmembrane region" description="Helical; Name=11" evidence="2">
    <location>
        <begin position="380"/>
        <end position="400"/>
    </location>
</feature>
<feature type="topological domain" description="Cytoplasmic" evidence="2">
    <location>
        <begin position="401"/>
        <end position="427"/>
    </location>
</feature>
<feature type="transmembrane region" description="Helical; Name=12" evidence="2">
    <location>
        <begin position="428"/>
        <end position="448"/>
    </location>
</feature>
<feature type="topological domain" description="Extracellular" evidence="2">
    <location>
        <begin position="449"/>
        <end position="490"/>
    </location>
</feature>
<feature type="region of interest" description="Disordered" evidence="3">
    <location>
        <begin position="466"/>
        <end position="490"/>
    </location>
</feature>
<feature type="modified residue" description="N-acetylmethionine" evidence="1">
    <location>
        <position position="1"/>
    </location>
</feature>
<feature type="glycosylation site" description="N-linked (GlcNAc...) asparagine" evidence="2">
    <location>
        <position position="12"/>
    </location>
</feature>
<feature type="glycosylation site" description="N-linked (GlcNAc...) asparagine" evidence="2">
    <location>
        <position position="453"/>
    </location>
</feature>
<feature type="sequence conflict" description="In Ref. 1; BAA22622." evidence="5" ref="1">
    <original>RV</original>
    <variation>QM</variation>
    <location>
        <begin position="183"/>
        <end position="184"/>
    </location>
</feature>
<feature type="sequence conflict" description="In Ref. 1; BAA22622." evidence="5" ref="1">
    <original>R</original>
    <variation>K</variation>
    <location>
        <position position="272"/>
    </location>
</feature>
<comment type="subcellular location">
    <subcellularLocation>
        <location evidence="5">Membrane</location>
        <topology evidence="5">Multi-pass membrane protein</topology>
    </subcellularLocation>
</comment>
<comment type="tissue specificity">
    <text evidence="4">Expressed in various tissues.</text>
</comment>
<comment type="developmental stage">
    <text evidence="4">Evenly distributed throughout the neonatal brain.</text>
</comment>
<comment type="similarity">
    <text evidence="5">Belongs to the major facilitator superfamily.</text>
</comment>